<reference key="1">
    <citation type="submission" date="2006-06" db="EMBL/GenBank/DDBJ databases">
        <title>Complete sequence of chromosome of Mesorhizobium sp. BNC1.</title>
        <authorList>
            <consortium name="US DOE Joint Genome Institute"/>
            <person name="Copeland A."/>
            <person name="Lucas S."/>
            <person name="Lapidus A."/>
            <person name="Barry K."/>
            <person name="Detter J.C."/>
            <person name="Glavina del Rio T."/>
            <person name="Hammon N."/>
            <person name="Israni S."/>
            <person name="Dalin E."/>
            <person name="Tice H."/>
            <person name="Pitluck S."/>
            <person name="Chertkov O."/>
            <person name="Brettin T."/>
            <person name="Bruce D."/>
            <person name="Han C."/>
            <person name="Tapia R."/>
            <person name="Gilna P."/>
            <person name="Schmutz J."/>
            <person name="Larimer F."/>
            <person name="Land M."/>
            <person name="Hauser L."/>
            <person name="Kyrpides N."/>
            <person name="Mikhailova N."/>
            <person name="Richardson P."/>
        </authorList>
    </citation>
    <scope>NUCLEOTIDE SEQUENCE [LARGE SCALE GENOMIC DNA]</scope>
    <source>
        <strain>BNC1</strain>
    </source>
</reference>
<proteinExistence type="inferred from homology"/>
<keyword id="KW-0067">ATP-binding</keyword>
<keyword id="KW-0460">Magnesium</keyword>
<keyword id="KW-0547">Nucleotide-binding</keyword>
<keyword id="KW-0808">Transferase</keyword>
<keyword id="KW-0819">tRNA processing</keyword>
<comment type="function">
    <text evidence="1">Catalyzes the transfer of a dimethylallyl group onto the adenine at position 37 in tRNAs that read codons beginning with uridine, leading to the formation of N6-(dimethylallyl)adenosine (i(6)A).</text>
</comment>
<comment type="catalytic activity">
    <reaction evidence="1">
        <text>adenosine(37) in tRNA + dimethylallyl diphosphate = N(6)-dimethylallyladenosine(37) in tRNA + diphosphate</text>
        <dbReference type="Rhea" id="RHEA:26482"/>
        <dbReference type="Rhea" id="RHEA-COMP:10162"/>
        <dbReference type="Rhea" id="RHEA-COMP:10375"/>
        <dbReference type="ChEBI" id="CHEBI:33019"/>
        <dbReference type="ChEBI" id="CHEBI:57623"/>
        <dbReference type="ChEBI" id="CHEBI:74411"/>
        <dbReference type="ChEBI" id="CHEBI:74415"/>
        <dbReference type="EC" id="2.5.1.75"/>
    </reaction>
</comment>
<comment type="cofactor">
    <cofactor evidence="1">
        <name>Mg(2+)</name>
        <dbReference type="ChEBI" id="CHEBI:18420"/>
    </cofactor>
</comment>
<comment type="subunit">
    <text evidence="1">Monomer.</text>
</comment>
<comment type="similarity">
    <text evidence="1">Belongs to the IPP transferase family.</text>
</comment>
<evidence type="ECO:0000255" key="1">
    <source>
        <dbReference type="HAMAP-Rule" id="MF_00185"/>
    </source>
</evidence>
<protein>
    <recommendedName>
        <fullName evidence="1">tRNA dimethylallyltransferase</fullName>
        <ecNumber evidence="1">2.5.1.75</ecNumber>
    </recommendedName>
    <alternativeName>
        <fullName evidence="1">Dimethylallyl diphosphate:tRNA dimethylallyltransferase</fullName>
        <shortName evidence="1">DMAPP:tRNA dimethylallyltransferase</shortName>
        <shortName evidence="1">DMATase</shortName>
    </alternativeName>
    <alternativeName>
        <fullName evidence="1">Isopentenyl-diphosphate:tRNA isopentenyltransferase</fullName>
        <shortName evidence="1">IPP transferase</shortName>
        <shortName evidence="1">IPPT</shortName>
        <shortName evidence="1">IPTase</shortName>
    </alternativeName>
</protein>
<feature type="chain" id="PRO_0000377216" description="tRNA dimethylallyltransferase">
    <location>
        <begin position="1"/>
        <end position="292"/>
    </location>
</feature>
<feature type="region of interest" description="Interaction with substrate tRNA" evidence="1">
    <location>
        <begin position="35"/>
        <end position="38"/>
    </location>
</feature>
<feature type="region of interest" description="Interaction with substrate tRNA" evidence="1">
    <location>
        <begin position="159"/>
        <end position="163"/>
    </location>
</feature>
<feature type="binding site" evidence="1">
    <location>
        <begin position="10"/>
        <end position="17"/>
    </location>
    <ligand>
        <name>ATP</name>
        <dbReference type="ChEBI" id="CHEBI:30616"/>
    </ligand>
</feature>
<feature type="binding site" evidence="1">
    <location>
        <begin position="12"/>
        <end position="17"/>
    </location>
    <ligand>
        <name>substrate</name>
    </ligand>
</feature>
<feature type="site" description="Interaction with substrate tRNA" evidence="1">
    <location>
        <position position="101"/>
    </location>
</feature>
<feature type="site" description="Interaction with substrate tRNA" evidence="1">
    <location>
        <position position="123"/>
    </location>
</feature>
<name>MIAA_CHESB</name>
<dbReference type="EC" id="2.5.1.75" evidence="1"/>
<dbReference type="EMBL" id="CP000390">
    <property type="protein sequence ID" value="ABG63137.1"/>
    <property type="molecule type" value="Genomic_DNA"/>
</dbReference>
<dbReference type="SMR" id="Q11HI8"/>
<dbReference type="STRING" id="266779.Meso_1743"/>
<dbReference type="KEGG" id="mes:Meso_1743"/>
<dbReference type="eggNOG" id="COG0324">
    <property type="taxonomic scope" value="Bacteria"/>
</dbReference>
<dbReference type="HOGENOM" id="CLU_032616_0_1_5"/>
<dbReference type="OrthoDB" id="9776390at2"/>
<dbReference type="GO" id="GO:0005524">
    <property type="term" value="F:ATP binding"/>
    <property type="evidence" value="ECO:0007669"/>
    <property type="project" value="UniProtKB-UniRule"/>
</dbReference>
<dbReference type="GO" id="GO:0052381">
    <property type="term" value="F:tRNA dimethylallyltransferase activity"/>
    <property type="evidence" value="ECO:0007669"/>
    <property type="project" value="UniProtKB-UniRule"/>
</dbReference>
<dbReference type="GO" id="GO:0006400">
    <property type="term" value="P:tRNA modification"/>
    <property type="evidence" value="ECO:0007669"/>
    <property type="project" value="TreeGrafter"/>
</dbReference>
<dbReference type="FunFam" id="1.10.20.140:FF:000001">
    <property type="entry name" value="tRNA dimethylallyltransferase"/>
    <property type="match status" value="1"/>
</dbReference>
<dbReference type="Gene3D" id="1.10.20.140">
    <property type="match status" value="1"/>
</dbReference>
<dbReference type="Gene3D" id="3.40.50.300">
    <property type="entry name" value="P-loop containing nucleotide triphosphate hydrolases"/>
    <property type="match status" value="1"/>
</dbReference>
<dbReference type="HAMAP" id="MF_00185">
    <property type="entry name" value="IPP_trans"/>
    <property type="match status" value="1"/>
</dbReference>
<dbReference type="InterPro" id="IPR039657">
    <property type="entry name" value="Dimethylallyltransferase"/>
</dbReference>
<dbReference type="InterPro" id="IPR018022">
    <property type="entry name" value="IPT"/>
</dbReference>
<dbReference type="InterPro" id="IPR027417">
    <property type="entry name" value="P-loop_NTPase"/>
</dbReference>
<dbReference type="NCBIfam" id="TIGR00174">
    <property type="entry name" value="miaA"/>
    <property type="match status" value="1"/>
</dbReference>
<dbReference type="PANTHER" id="PTHR11088">
    <property type="entry name" value="TRNA DIMETHYLALLYLTRANSFERASE"/>
    <property type="match status" value="1"/>
</dbReference>
<dbReference type="PANTHER" id="PTHR11088:SF60">
    <property type="entry name" value="TRNA DIMETHYLALLYLTRANSFERASE"/>
    <property type="match status" value="1"/>
</dbReference>
<dbReference type="Pfam" id="PF01715">
    <property type="entry name" value="IPPT"/>
    <property type="match status" value="1"/>
</dbReference>
<dbReference type="SUPFAM" id="SSF52540">
    <property type="entry name" value="P-loop containing nucleoside triphosphate hydrolases"/>
    <property type="match status" value="2"/>
</dbReference>
<sequence>MLKGATLIAGPTASGKSALALQMARERDGVIVNADSMQVYSVLHLLTARPGPEELAMAPHRLYGHVPPSKPYSTGRWISDVRELIEAEALARRAVIFVGGTGLYFRALTEGLSPMPEIPEAVRIRWRKRLAEEGGEALHRLLGEADPLAASRIRPSDSQRIVRALEVVEASGRPISYWQGQASHPLVDMTSCRKIVLMPDRNTLASRIEKRFDQMLRHGAVEEVKQLLALDLPPSMPAMKAIGVREISAVLAGEISLDEAGSRAIAATRQYAKRQITWFRHQLGPDWEHMPV</sequence>
<accession>Q11HI8</accession>
<gene>
    <name evidence="1" type="primary">miaA</name>
    <name type="ordered locus">Meso_1743</name>
</gene>
<organism>
    <name type="scientific">Chelativorans sp. (strain BNC1)</name>
    <dbReference type="NCBI Taxonomy" id="266779"/>
    <lineage>
        <taxon>Bacteria</taxon>
        <taxon>Pseudomonadati</taxon>
        <taxon>Pseudomonadota</taxon>
        <taxon>Alphaproteobacteria</taxon>
        <taxon>Hyphomicrobiales</taxon>
        <taxon>Phyllobacteriaceae</taxon>
        <taxon>Chelativorans</taxon>
    </lineage>
</organism>